<proteinExistence type="evidence at protein level"/>
<evidence type="ECO:0000250" key="1">
    <source>
        <dbReference type="UniProtKB" id="O94916"/>
    </source>
</evidence>
<evidence type="ECO:0000250" key="2">
    <source>
        <dbReference type="UniProtKB" id="Q9WV30"/>
    </source>
</evidence>
<evidence type="ECO:0000255" key="3">
    <source>
        <dbReference type="PROSITE-ProRule" id="PRU00265"/>
    </source>
</evidence>
<evidence type="ECO:0000256" key="4">
    <source>
        <dbReference type="SAM" id="MobiDB-lite"/>
    </source>
</evidence>
<evidence type="ECO:0000269" key="5">
    <source>
    </source>
</evidence>
<reference key="1">
    <citation type="journal article" date="2004" name="Nature">
        <title>Genome sequence of the Brown Norway rat yields insights into mammalian evolution.</title>
        <authorList>
            <person name="Gibbs R.A."/>
            <person name="Weinstock G.M."/>
            <person name="Metzker M.L."/>
            <person name="Muzny D.M."/>
            <person name="Sodergren E.J."/>
            <person name="Scherer S."/>
            <person name="Scott G."/>
            <person name="Steffen D."/>
            <person name="Worley K.C."/>
            <person name="Burch P.E."/>
            <person name="Okwuonu G."/>
            <person name="Hines S."/>
            <person name="Lewis L."/>
            <person name="Deramo C."/>
            <person name="Delgado O."/>
            <person name="Dugan-Rocha S."/>
            <person name="Miner G."/>
            <person name="Morgan M."/>
            <person name="Hawes A."/>
            <person name="Gill R."/>
            <person name="Holt R.A."/>
            <person name="Adams M.D."/>
            <person name="Amanatides P.G."/>
            <person name="Baden-Tillson H."/>
            <person name="Barnstead M."/>
            <person name="Chin S."/>
            <person name="Evans C.A."/>
            <person name="Ferriera S."/>
            <person name="Fosler C."/>
            <person name="Glodek A."/>
            <person name="Gu Z."/>
            <person name="Jennings D."/>
            <person name="Kraft C.L."/>
            <person name="Nguyen T."/>
            <person name="Pfannkoch C.M."/>
            <person name="Sitter C."/>
            <person name="Sutton G.G."/>
            <person name="Venter J.C."/>
            <person name="Woodage T."/>
            <person name="Smith D."/>
            <person name="Lee H.-M."/>
            <person name="Gustafson E."/>
            <person name="Cahill P."/>
            <person name="Kana A."/>
            <person name="Doucette-Stamm L."/>
            <person name="Weinstock K."/>
            <person name="Fechtel K."/>
            <person name="Weiss R.B."/>
            <person name="Dunn D.M."/>
            <person name="Green E.D."/>
            <person name="Blakesley R.W."/>
            <person name="Bouffard G.G."/>
            <person name="De Jong P.J."/>
            <person name="Osoegawa K."/>
            <person name="Zhu B."/>
            <person name="Marra M."/>
            <person name="Schein J."/>
            <person name="Bosdet I."/>
            <person name="Fjell C."/>
            <person name="Jones S."/>
            <person name="Krzywinski M."/>
            <person name="Mathewson C."/>
            <person name="Siddiqui A."/>
            <person name="Wye N."/>
            <person name="McPherson J."/>
            <person name="Zhao S."/>
            <person name="Fraser C.M."/>
            <person name="Shetty J."/>
            <person name="Shatsman S."/>
            <person name="Geer K."/>
            <person name="Chen Y."/>
            <person name="Abramzon S."/>
            <person name="Nierman W.C."/>
            <person name="Havlak P.H."/>
            <person name="Chen R."/>
            <person name="Durbin K.J."/>
            <person name="Egan A."/>
            <person name="Ren Y."/>
            <person name="Song X.-Z."/>
            <person name="Li B."/>
            <person name="Liu Y."/>
            <person name="Qin X."/>
            <person name="Cawley S."/>
            <person name="Cooney A.J."/>
            <person name="D'Souza L.M."/>
            <person name="Martin K."/>
            <person name="Wu J.Q."/>
            <person name="Gonzalez-Garay M.L."/>
            <person name="Jackson A.R."/>
            <person name="Kalafus K.J."/>
            <person name="McLeod M.P."/>
            <person name="Milosavljevic A."/>
            <person name="Virk D."/>
            <person name="Volkov A."/>
            <person name="Wheeler D.A."/>
            <person name="Zhang Z."/>
            <person name="Bailey J.A."/>
            <person name="Eichler E.E."/>
            <person name="Tuzun E."/>
            <person name="Birney E."/>
            <person name="Mongin E."/>
            <person name="Ureta-Vidal A."/>
            <person name="Woodwark C."/>
            <person name="Zdobnov E."/>
            <person name="Bork P."/>
            <person name="Suyama M."/>
            <person name="Torrents D."/>
            <person name="Alexandersson M."/>
            <person name="Trask B.J."/>
            <person name="Young J.M."/>
            <person name="Huang H."/>
            <person name="Wang H."/>
            <person name="Xing H."/>
            <person name="Daniels S."/>
            <person name="Gietzen D."/>
            <person name="Schmidt J."/>
            <person name="Stevens K."/>
            <person name="Vitt U."/>
            <person name="Wingrove J."/>
            <person name="Camara F."/>
            <person name="Mar Alba M."/>
            <person name="Abril J.F."/>
            <person name="Guigo R."/>
            <person name="Smit A."/>
            <person name="Dubchak I."/>
            <person name="Rubin E.M."/>
            <person name="Couronne O."/>
            <person name="Poliakov A."/>
            <person name="Huebner N."/>
            <person name="Ganten D."/>
            <person name="Goesele C."/>
            <person name="Hummel O."/>
            <person name="Kreitler T."/>
            <person name="Lee Y.-A."/>
            <person name="Monti J."/>
            <person name="Schulz H."/>
            <person name="Zimdahl H."/>
            <person name="Himmelbauer H."/>
            <person name="Lehrach H."/>
            <person name="Jacob H.J."/>
            <person name="Bromberg S."/>
            <person name="Gullings-Handley J."/>
            <person name="Jensen-Seaman M.I."/>
            <person name="Kwitek A.E."/>
            <person name="Lazar J."/>
            <person name="Pasko D."/>
            <person name="Tonellato P.J."/>
            <person name="Twigger S."/>
            <person name="Ponting C.P."/>
            <person name="Duarte J.M."/>
            <person name="Rice S."/>
            <person name="Goodstadt L."/>
            <person name="Beatson S.A."/>
            <person name="Emes R.D."/>
            <person name="Winter E.E."/>
            <person name="Webber C."/>
            <person name="Brandt P."/>
            <person name="Nyakatura G."/>
            <person name="Adetobi M."/>
            <person name="Chiaromonte F."/>
            <person name="Elnitski L."/>
            <person name="Eswara P."/>
            <person name="Hardison R.C."/>
            <person name="Hou M."/>
            <person name="Kolbe D."/>
            <person name="Makova K."/>
            <person name="Miller W."/>
            <person name="Nekrutenko A."/>
            <person name="Riemer C."/>
            <person name="Schwartz S."/>
            <person name="Taylor J."/>
            <person name="Yang S."/>
            <person name="Zhang Y."/>
            <person name="Lindpaintner K."/>
            <person name="Andrews T.D."/>
            <person name="Caccamo M."/>
            <person name="Clamp M."/>
            <person name="Clarke L."/>
            <person name="Curwen V."/>
            <person name="Durbin R.M."/>
            <person name="Eyras E."/>
            <person name="Searle S.M."/>
            <person name="Cooper G.M."/>
            <person name="Batzoglou S."/>
            <person name="Brudno M."/>
            <person name="Sidow A."/>
            <person name="Stone E.A."/>
            <person name="Payseur B.A."/>
            <person name="Bourque G."/>
            <person name="Lopez-Otin C."/>
            <person name="Puente X.S."/>
            <person name="Chakrabarti K."/>
            <person name="Chatterji S."/>
            <person name="Dewey C."/>
            <person name="Pachter L."/>
            <person name="Bray N."/>
            <person name="Yap V.B."/>
            <person name="Caspi A."/>
            <person name="Tesler G."/>
            <person name="Pevzner P.A."/>
            <person name="Haussler D."/>
            <person name="Roskin K.M."/>
            <person name="Baertsch R."/>
            <person name="Clawson H."/>
            <person name="Furey T.S."/>
            <person name="Hinrichs A.S."/>
            <person name="Karolchik D."/>
            <person name="Kent W.J."/>
            <person name="Rosenbloom K.R."/>
            <person name="Trumbower H."/>
            <person name="Weirauch M."/>
            <person name="Cooper D.N."/>
            <person name="Stenson P.D."/>
            <person name="Ma B."/>
            <person name="Brent M."/>
            <person name="Arumugam M."/>
            <person name="Shteynberg D."/>
            <person name="Copley R.R."/>
            <person name="Taylor M.S."/>
            <person name="Riethman H."/>
            <person name="Mudunuri U."/>
            <person name="Peterson J."/>
            <person name="Guyer M."/>
            <person name="Felsenfeld A."/>
            <person name="Old S."/>
            <person name="Mockrin S."/>
            <person name="Collins F.S."/>
        </authorList>
    </citation>
    <scope>NUCLEOTIDE SEQUENCE [LARGE SCALE GENOMIC DNA]</scope>
    <source>
        <strain>Brown Norway</strain>
    </source>
</reference>
<reference key="2">
    <citation type="submission" date="2005-07" db="EMBL/GenBank/DDBJ databases">
        <authorList>
            <person name="Mural R.J."/>
            <person name="Adams M.D."/>
            <person name="Myers E.W."/>
            <person name="Smith H.O."/>
            <person name="Venter J.C."/>
        </authorList>
    </citation>
    <scope>NUCLEOTIDE SEQUENCE [LARGE SCALE GENOMIC DNA]</scope>
</reference>
<reference key="3">
    <citation type="journal article" date="2013" name="J. Lipid Res.">
        <title>Fat-specific protein 27 modulates nuclear factor of activated T cells 5 and the cellular response to stress.</title>
        <authorList>
            <person name="Ueno M."/>
            <person name="Shen W.J."/>
            <person name="Patel S."/>
            <person name="Greenberg A.S."/>
            <person name="Azhar S."/>
            <person name="Kraemer F.B."/>
        </authorList>
    </citation>
    <scope>FUNCTION</scope>
    <scope>INTERACTION WITH CIDEC</scope>
    <scope>SUBCELLULAR LOCATION</scope>
    <scope>TISSUE SPECIFICITY</scope>
    <scope>INDUCTION BY OSMOTIC STRESS</scope>
</reference>
<gene>
    <name type="primary">Nfat5</name>
</gene>
<protein>
    <recommendedName>
        <fullName>Nuclear factor of activated T-cells 5</fullName>
        <shortName>NF-AT5</shortName>
    </recommendedName>
    <alternativeName>
        <fullName>T-cell transcription factor NFAT5</fullName>
    </alternativeName>
</protein>
<feature type="chain" id="PRO_0000423618" description="Nuclear factor of activated T-cells 5">
    <location>
        <begin position="1"/>
        <end position="1548"/>
    </location>
</feature>
<feature type="domain" description="RHD" evidence="3">
    <location>
        <begin position="281"/>
        <end position="460"/>
    </location>
</feature>
<feature type="DNA-binding region" evidence="1">
    <location>
        <begin position="310"/>
        <end position="317"/>
    </location>
</feature>
<feature type="region of interest" description="Disordered" evidence="4">
    <location>
        <begin position="54"/>
        <end position="106"/>
    </location>
</feature>
<feature type="region of interest" description="Disordered" evidence="4">
    <location>
        <begin position="141"/>
        <end position="180"/>
    </location>
</feature>
<feature type="region of interest" description="Disordered" evidence="4">
    <location>
        <begin position="192"/>
        <end position="237"/>
    </location>
</feature>
<feature type="region of interest" description="Disordered" evidence="4">
    <location>
        <begin position="258"/>
        <end position="282"/>
    </location>
</feature>
<feature type="region of interest" description="Disordered" evidence="4">
    <location>
        <begin position="659"/>
        <end position="682"/>
    </location>
</feature>
<feature type="region of interest" description="Disordered" evidence="4">
    <location>
        <begin position="750"/>
        <end position="777"/>
    </location>
</feature>
<feature type="region of interest" description="Disordered" evidence="4">
    <location>
        <begin position="851"/>
        <end position="892"/>
    </location>
</feature>
<feature type="region of interest" description="Disordered" evidence="4">
    <location>
        <begin position="970"/>
        <end position="1010"/>
    </location>
</feature>
<feature type="region of interest" description="Disordered" evidence="4">
    <location>
        <begin position="1097"/>
        <end position="1127"/>
    </location>
</feature>
<feature type="region of interest" description="Disordered" evidence="4">
    <location>
        <begin position="1257"/>
        <end position="1388"/>
    </location>
</feature>
<feature type="compositionally biased region" description="Low complexity" evidence="4">
    <location>
        <begin position="81"/>
        <end position="106"/>
    </location>
</feature>
<feature type="compositionally biased region" description="Polar residues" evidence="4">
    <location>
        <begin position="141"/>
        <end position="151"/>
    </location>
</feature>
<feature type="compositionally biased region" description="Low complexity" evidence="4">
    <location>
        <begin position="196"/>
        <end position="209"/>
    </location>
</feature>
<feature type="compositionally biased region" description="Basic residues" evidence="4">
    <location>
        <begin position="217"/>
        <end position="229"/>
    </location>
</feature>
<feature type="compositionally biased region" description="Polar residues" evidence="4">
    <location>
        <begin position="258"/>
        <end position="277"/>
    </location>
</feature>
<feature type="compositionally biased region" description="Low complexity" evidence="4">
    <location>
        <begin position="662"/>
        <end position="672"/>
    </location>
</feature>
<feature type="compositionally biased region" description="Low complexity" evidence="4">
    <location>
        <begin position="751"/>
        <end position="765"/>
    </location>
</feature>
<feature type="compositionally biased region" description="Polar residues" evidence="4">
    <location>
        <begin position="766"/>
        <end position="777"/>
    </location>
</feature>
<feature type="compositionally biased region" description="Polar residues" evidence="4">
    <location>
        <begin position="851"/>
        <end position="860"/>
    </location>
</feature>
<feature type="compositionally biased region" description="Polar residues" evidence="4">
    <location>
        <begin position="876"/>
        <end position="886"/>
    </location>
</feature>
<feature type="compositionally biased region" description="Low complexity" evidence="4">
    <location>
        <begin position="979"/>
        <end position="993"/>
    </location>
</feature>
<feature type="compositionally biased region" description="Polar residues" evidence="4">
    <location>
        <begin position="1113"/>
        <end position="1127"/>
    </location>
</feature>
<feature type="compositionally biased region" description="Low complexity" evidence="4">
    <location>
        <begin position="1264"/>
        <end position="1283"/>
    </location>
</feature>
<feature type="compositionally biased region" description="Polar residues" evidence="4">
    <location>
        <begin position="1284"/>
        <end position="1300"/>
    </location>
</feature>
<feature type="compositionally biased region" description="Polar residues" evidence="4">
    <location>
        <begin position="1308"/>
        <end position="1333"/>
    </location>
</feature>
<feature type="compositionally biased region" description="Low complexity" evidence="4">
    <location>
        <begin position="1334"/>
        <end position="1348"/>
    </location>
</feature>
<feature type="compositionally biased region" description="Polar residues" evidence="4">
    <location>
        <begin position="1349"/>
        <end position="1388"/>
    </location>
</feature>
<feature type="modified residue" description="Phosphoserine" evidence="1">
    <location>
        <position position="137"/>
    </location>
</feature>
<feature type="modified residue" description="N6-acetyllysine" evidence="2">
    <location>
        <position position="139"/>
    </location>
</feature>
<feature type="modified residue" description="Phosphoserine" evidence="1">
    <location>
        <position position="151"/>
    </location>
</feature>
<feature type="modified residue" description="Phosphothreonine; by CDK5" evidence="1">
    <location>
        <position position="152"/>
    </location>
</feature>
<feature type="modified residue" description="Phosphoserine" evidence="1">
    <location>
        <position position="172"/>
    </location>
</feature>
<feature type="modified residue" description="Phosphoserine" evidence="1">
    <location>
        <position position="577"/>
    </location>
</feature>
<feature type="cross-link" description="Glycyl lysine isopeptide (Lys-Gly) (interchain with G-Cter in SUMO1); alternate" evidence="1">
    <location>
        <position position="572"/>
    </location>
</feature>
<feature type="cross-link" description="Glycyl lysine isopeptide (Lys-Gly) (interchain with G-Cter in SUMO2); alternate" evidence="1">
    <location>
        <position position="572"/>
    </location>
</feature>
<feature type="cross-link" description="Glycyl lysine isopeptide (Lys-Gly) (interchain with G-Cter in SUMO2)" evidence="1">
    <location>
        <position position="619"/>
    </location>
</feature>
<name>NFAT5_RAT</name>
<sequence length="1548" mass="167207">MPSDFISLLSADLDLESPKSLYSRDSLKLHPSQNFHRAGLLEESVYDLLPKELQLPPPRETSAASMSQTSGGEAGSPPPAVVAADASSAPSSSMGGACSSFTTSSSPTIYSTSVTDSKAMQVESCSSAVGVSNRGVSEKQLTGNTVQQHPSTPKRHTVLYISPPPEDLLDNSRMSCQDEGCGLESEQSCSMWMEDSPSNFSNMSTSSYNDNTEVPRKSRKRNPKQRPGVKRRDCEESNMDIFDADSAKAPHYVLSQLTTDNKGNSKAGNGTLDSQKGTGVKKSPMLCGQYPVKSEGKELKIVVQPETQHRARYLTEGSRGSVKDRTQQGFPTVKLEGHNEPVVLQVFVGNDSGRVKPHGFYQACRVTGRNTTPCKEVDIEGTTVIEVGLDPSSNMTLAVDCVGILKLRNADVEARIGIAGSKKKSTRARLVFRVNITRKDGSTLTLQTPSSPILCTQPAGVPEILKKSLHSCSVKGEEEVFLIGKNFLKGTKVIFQENVSDENSWKSEAEIDMELFHQNHLIVKVPPYHDQHITLPVSVGIYVVTNAGRSHDVQPFTYTPDPAAGALSVNVKKEISSPARPCSFEEALKAMKTTGCNVDKVTILPNALITPLISSSMIKTEDVTPMEVTSEKRSSPIFQTTKTVGSTQQTLETISNIAGNASFSSPSSSHLSPENENQQQLQPKAYNPETLTTIQTQDISQPGTFPAVSASSQLPSSDALLQQAAQFQTRDAQSRDTMQSDSVVNLSQLTEAPQQQQSPLQEQAQIPSNIFPSPNSVSQLQSTIQQLQAGSFTGSTASGSNGSVDLVQQVLEAQQQLSSVLFSTPDGNENVQEQLNADIFQVSQIQNSVSPGMFSSTESAVHTRPDNLLPGRADSVHQQTENTLSSQQQQQQQQQQQQQQQVIESSAAMVMEMQQSICQAAAQIQSELFPSAASANGSLQQSPVYQQPSHMMSALPTSEDMQMQCELFSSPPAVSGNETSTTTTPQVATPGSTMFQPPNSGDGEETGAQAKQIQSSVFQTMVQMQHSGDSQPQVNLFSSTKNIMSVQSNGTQQQGNSLFQQGSEMLSLQSGSFLQQSSHSQAQLFHPQNPIADAQSLSQETQGPMFHSANPIVHSQTSTASSEQLQPSMFHSQSTIAVLQGSSVPQDQQSPNIYLSQSSISNLQTNTVAQEEQISFFSAQNSISPLQSTSNTEQQAAFQQQPPISHIQTPLLSQEQAQPSQQGLFQPQVALGSLPANPMPQNQQGPIFQTQRPIVGMQSNSPSQEQQQQQQQQQQQQQQQQQQSILFSNQNAMATMASQKQPPPNMIFSPNQNPMASQEQQNQSIFHQQSNMAPMNQEQQPMQFQNQPTVSSLQNPGPTPSESPQTSLFHSSPQIQLVQGSPSSQEQQVTLFLSPASMSALQTSINQPDMQQSPLYSPQNNIPGIQGSTSSPQPQAALFHNTTGGTINQLQNSPGSSQQTSGMFLFGIQNNCSQLLTSGPATLPEQLMAINQPGQPQNEGQSSVTTLLSQQMPESAPLASSVNNSQNMEKIDLLVSLQSQGNNLTGSF</sequence>
<accession>D3ZGB1</accession>
<comment type="function">
    <text evidence="1 5">Transcription factor involved, among others, in the transcriptional regulation of osmoprotective and inflammatory genes (PubMed:23233732). Binds the DNA consensus sequence 5'-[ACT][AG]TGGAAA[CAT]A[TA][ATC][CA][ATG][GT][GAC][CG][CT]-3'. Mediates the transcriptional response to hypertonicity. Positively regulates the transcription of LCN2 and S100A4 genes; optimal transactivation of these genes requires the presence of DDX5/DDX17. Also involved in the DNA damage response by preventing formation of R-loops; R-loops are composed of a DNA:RNA hybrid and the associated non-template single-stranded DNA (By similarity).</text>
</comment>
<comment type="subunit">
    <text evidence="1 5">Homodimer when bound to DNA, completely encircles its DNA target (By similarity). Interacts with CIDEC; this interaction is direct and retains NFAT5 in the cytoplasm (PubMed:23233732). Does not bind with Fos and Jun transcription factors. Interacts with DDX5 and DDX17; this interaction leads to DDX5/DDX17 recruitment to LNC2 and S100A4 promoters and NFAT5-mediated DDX5/DDX17-enhanced transactivation (By similarity).</text>
</comment>
<comment type="subcellular location">
    <subcellularLocation>
        <location evidence="5">Nucleus</location>
    </subcellularLocation>
    <subcellularLocation>
        <location evidence="5">Cytoplasm</location>
    </subcellularLocation>
    <subcellularLocation>
        <location evidence="1">Chromosome</location>
    </subcellularLocation>
    <text evidence="1 2">Nuclear distribution increases under hypertonic conditions (By similarity). Recruited to sites of R-loop-associated DNA damage following poly-ADP-ribosylation by PARP1 (By similarity).</text>
</comment>
<comment type="induction">
    <text evidence="5">Up-regulated under hypertonic conditions.</text>
</comment>
<comment type="PTM">
    <text evidence="1">Phosphorylated. Phosphorylated at Thr-152 by CDK5 in response to osmotic stress; this phosphorylation mediates its rapid nuclear localization.</text>
</comment>
<comment type="PTM">
    <text evidence="1">Poly-ADP-ribosylated by PARP1 in response to DNA damage, promoting recruitment to sites of R-loop-associated DNA damage.</text>
</comment>
<organism>
    <name type="scientific">Rattus norvegicus</name>
    <name type="common">Rat</name>
    <dbReference type="NCBI Taxonomy" id="10116"/>
    <lineage>
        <taxon>Eukaryota</taxon>
        <taxon>Metazoa</taxon>
        <taxon>Chordata</taxon>
        <taxon>Craniata</taxon>
        <taxon>Vertebrata</taxon>
        <taxon>Euteleostomi</taxon>
        <taxon>Mammalia</taxon>
        <taxon>Eutheria</taxon>
        <taxon>Euarchontoglires</taxon>
        <taxon>Glires</taxon>
        <taxon>Rodentia</taxon>
        <taxon>Myomorpha</taxon>
        <taxon>Muroidea</taxon>
        <taxon>Muridae</taxon>
        <taxon>Murinae</taxon>
        <taxon>Rattus</taxon>
    </lineage>
</organism>
<dbReference type="EMBL" id="AABR06098525">
    <property type="status" value="NOT_ANNOTATED_CDS"/>
    <property type="molecule type" value="Genomic_DNA"/>
</dbReference>
<dbReference type="EMBL" id="AABR06098526">
    <property type="status" value="NOT_ANNOTATED_CDS"/>
    <property type="molecule type" value="Genomic_DNA"/>
</dbReference>
<dbReference type="EMBL" id="AABR06098527">
    <property type="status" value="NOT_ANNOTATED_CDS"/>
    <property type="molecule type" value="Genomic_DNA"/>
</dbReference>
<dbReference type="EMBL" id="CH473972">
    <property type="protein sequence ID" value="EDL92476.1"/>
    <property type="molecule type" value="Genomic_DNA"/>
</dbReference>
<dbReference type="RefSeq" id="NP_001100895.1">
    <property type="nucleotide sequence ID" value="NM_001107425.1"/>
</dbReference>
<dbReference type="SMR" id="D3ZGB1"/>
<dbReference type="BioGRID" id="258819">
    <property type="interactions" value="1"/>
</dbReference>
<dbReference type="FunCoup" id="D3ZGB1">
    <property type="interactions" value="2667"/>
</dbReference>
<dbReference type="STRING" id="10116.ENSRNOP00000017005"/>
<dbReference type="GlyGen" id="D3ZGB1">
    <property type="glycosylation" value="2 sites"/>
</dbReference>
<dbReference type="iPTMnet" id="D3ZGB1"/>
<dbReference type="PhosphoSitePlus" id="D3ZGB1"/>
<dbReference type="PaxDb" id="10116-ENSRNOP00000017005"/>
<dbReference type="Ensembl" id="ENSRNOT00000017005.6">
    <property type="protein sequence ID" value="ENSRNOP00000017005.3"/>
    <property type="gene ID" value="ENSRNOG00000011879.8"/>
</dbReference>
<dbReference type="GeneID" id="307820"/>
<dbReference type="KEGG" id="rno:307820"/>
<dbReference type="AGR" id="RGD:1309142"/>
<dbReference type="CTD" id="10725"/>
<dbReference type="RGD" id="1309142">
    <property type="gene designation" value="Nfat5"/>
</dbReference>
<dbReference type="eggNOG" id="ENOG502QSVE">
    <property type="taxonomic scope" value="Eukaryota"/>
</dbReference>
<dbReference type="GeneTree" id="ENSGT00940000155213"/>
<dbReference type="HOGENOM" id="CLU_004396_0_0_1"/>
<dbReference type="InParanoid" id="D3ZGB1"/>
<dbReference type="OMA" id="PYQNQVI"/>
<dbReference type="OrthoDB" id="5346094at2759"/>
<dbReference type="TreeFam" id="TF326480"/>
<dbReference type="PRO" id="PR:D3ZGB1"/>
<dbReference type="Proteomes" id="UP000002494">
    <property type="component" value="Chromosome 19"/>
</dbReference>
<dbReference type="Proteomes" id="UP000234681">
    <property type="component" value="Chromosome 19"/>
</dbReference>
<dbReference type="Bgee" id="ENSRNOG00000011879">
    <property type="expression patterns" value="Expressed in Ammon's horn and 20 other cell types or tissues"/>
</dbReference>
<dbReference type="ExpressionAtlas" id="D3ZGB1">
    <property type="expression patterns" value="baseline and differential"/>
</dbReference>
<dbReference type="GO" id="GO:0005694">
    <property type="term" value="C:chromosome"/>
    <property type="evidence" value="ECO:0007669"/>
    <property type="project" value="UniProtKB-SubCell"/>
</dbReference>
<dbReference type="GO" id="GO:0005737">
    <property type="term" value="C:cytoplasm"/>
    <property type="evidence" value="ECO:0000266"/>
    <property type="project" value="RGD"/>
</dbReference>
<dbReference type="GO" id="GO:0005829">
    <property type="term" value="C:cytosol"/>
    <property type="evidence" value="ECO:0007669"/>
    <property type="project" value="Ensembl"/>
</dbReference>
<dbReference type="GO" id="GO:0005654">
    <property type="term" value="C:nucleoplasm"/>
    <property type="evidence" value="ECO:0007669"/>
    <property type="project" value="Ensembl"/>
</dbReference>
<dbReference type="GO" id="GO:0005634">
    <property type="term" value="C:nucleus"/>
    <property type="evidence" value="ECO:0000266"/>
    <property type="project" value="RGD"/>
</dbReference>
<dbReference type="GO" id="GO:0005667">
    <property type="term" value="C:transcription regulator complex"/>
    <property type="evidence" value="ECO:0000318"/>
    <property type="project" value="GO_Central"/>
</dbReference>
<dbReference type="GO" id="GO:0003682">
    <property type="term" value="F:chromatin binding"/>
    <property type="evidence" value="ECO:0000250"/>
    <property type="project" value="UniProtKB"/>
</dbReference>
<dbReference type="GO" id="GO:0003677">
    <property type="term" value="F:DNA binding"/>
    <property type="evidence" value="ECO:0000266"/>
    <property type="project" value="RGD"/>
</dbReference>
<dbReference type="GO" id="GO:0001228">
    <property type="term" value="F:DNA-binding transcription activator activity, RNA polymerase II-specific"/>
    <property type="evidence" value="ECO:0000266"/>
    <property type="project" value="RGD"/>
</dbReference>
<dbReference type="GO" id="GO:0000981">
    <property type="term" value="F:DNA-binding transcription factor activity, RNA polymerase II-specific"/>
    <property type="evidence" value="ECO:0000318"/>
    <property type="project" value="GO_Central"/>
</dbReference>
<dbReference type="GO" id="GO:0000978">
    <property type="term" value="F:RNA polymerase II cis-regulatory region sequence-specific DNA binding"/>
    <property type="evidence" value="ECO:0000266"/>
    <property type="project" value="RGD"/>
</dbReference>
<dbReference type="GO" id="GO:1990837">
    <property type="term" value="F:sequence-specific double-stranded DNA binding"/>
    <property type="evidence" value="ECO:0000266"/>
    <property type="project" value="RGD"/>
</dbReference>
<dbReference type="GO" id="GO:0033173">
    <property type="term" value="P:calcineurin-NFAT signaling cascade"/>
    <property type="evidence" value="ECO:0000318"/>
    <property type="project" value="GO_Central"/>
</dbReference>
<dbReference type="GO" id="GO:0071345">
    <property type="term" value="P:cellular response to cytokine stimulus"/>
    <property type="evidence" value="ECO:0000266"/>
    <property type="project" value="RGD"/>
</dbReference>
<dbReference type="GO" id="GO:0006974">
    <property type="term" value="P:DNA damage response"/>
    <property type="evidence" value="ECO:0000250"/>
    <property type="project" value="UniProtKB"/>
</dbReference>
<dbReference type="GO" id="GO:0043123">
    <property type="term" value="P:positive regulation of canonical NF-kappaB signal transduction"/>
    <property type="evidence" value="ECO:0000266"/>
    <property type="project" value="RGD"/>
</dbReference>
<dbReference type="GO" id="GO:0010628">
    <property type="term" value="P:positive regulation of gene expression"/>
    <property type="evidence" value="ECO:0000266"/>
    <property type="project" value="RGD"/>
</dbReference>
<dbReference type="GO" id="GO:1904996">
    <property type="term" value="P:positive regulation of leukocyte adhesion to vascular endothelial cell"/>
    <property type="evidence" value="ECO:0000266"/>
    <property type="project" value="RGD"/>
</dbReference>
<dbReference type="GO" id="GO:0045944">
    <property type="term" value="P:positive regulation of transcription by RNA polymerase II"/>
    <property type="evidence" value="ECO:0000266"/>
    <property type="project" value="RGD"/>
</dbReference>
<dbReference type="GO" id="GO:0062176">
    <property type="term" value="P:R-loop processing"/>
    <property type="evidence" value="ECO:0000250"/>
    <property type="project" value="UniProtKB"/>
</dbReference>
<dbReference type="GO" id="GO:0070884">
    <property type="term" value="P:regulation of calcineurin-NFAT signaling cascade"/>
    <property type="evidence" value="ECO:0000266"/>
    <property type="project" value="RGD"/>
</dbReference>
<dbReference type="CDD" id="cd01178">
    <property type="entry name" value="IPT_NFAT"/>
    <property type="match status" value="1"/>
</dbReference>
<dbReference type="CDD" id="cd07882">
    <property type="entry name" value="RHD-n_TonEBP"/>
    <property type="match status" value="1"/>
</dbReference>
<dbReference type="FunFam" id="2.60.40.10:FF:000174">
    <property type="entry name" value="Nuclear factor of activated T-cells 5, tonicity-responsive"/>
    <property type="match status" value="1"/>
</dbReference>
<dbReference type="FunFam" id="2.60.40.340:FF:000002">
    <property type="entry name" value="Nuclear factor of activated T-cells 5, tonicity-responsive"/>
    <property type="match status" value="1"/>
</dbReference>
<dbReference type="Gene3D" id="2.60.40.10">
    <property type="entry name" value="Immunoglobulins"/>
    <property type="match status" value="1"/>
</dbReference>
<dbReference type="Gene3D" id="2.60.40.340">
    <property type="entry name" value="Rel homology domain (RHD), DNA-binding domain"/>
    <property type="match status" value="1"/>
</dbReference>
<dbReference type="InterPro" id="IPR013783">
    <property type="entry name" value="Ig-like_fold"/>
</dbReference>
<dbReference type="InterPro" id="IPR014756">
    <property type="entry name" value="Ig_E-set"/>
</dbReference>
<dbReference type="InterPro" id="IPR002909">
    <property type="entry name" value="IPT_dom"/>
</dbReference>
<dbReference type="InterPro" id="IPR008366">
    <property type="entry name" value="NFAT"/>
</dbReference>
<dbReference type="InterPro" id="IPR015646">
    <property type="entry name" value="NFAT5_RHD_DNA-bd"/>
</dbReference>
<dbReference type="InterPro" id="IPR008967">
    <property type="entry name" value="p53-like_TF_DNA-bd_sf"/>
</dbReference>
<dbReference type="InterPro" id="IPR032397">
    <property type="entry name" value="RHD_dimer"/>
</dbReference>
<dbReference type="InterPro" id="IPR011539">
    <property type="entry name" value="RHD_DNA_bind_dom"/>
</dbReference>
<dbReference type="InterPro" id="IPR037059">
    <property type="entry name" value="RHD_DNA_bind_dom_sf"/>
</dbReference>
<dbReference type="PANTHER" id="PTHR12533">
    <property type="entry name" value="NFAT"/>
    <property type="match status" value="1"/>
</dbReference>
<dbReference type="PANTHER" id="PTHR12533:SF10">
    <property type="entry name" value="NUCLEAR FACTOR OF ACTIVATED T-CELLS 5"/>
    <property type="match status" value="1"/>
</dbReference>
<dbReference type="Pfam" id="PF16179">
    <property type="entry name" value="RHD_dimer"/>
    <property type="match status" value="1"/>
</dbReference>
<dbReference type="Pfam" id="PF00554">
    <property type="entry name" value="RHD_DNA_bind"/>
    <property type="match status" value="1"/>
</dbReference>
<dbReference type="PRINTS" id="PR01789">
    <property type="entry name" value="NUCFACTORATC"/>
</dbReference>
<dbReference type="SMART" id="SM00429">
    <property type="entry name" value="IPT"/>
    <property type="match status" value="1"/>
</dbReference>
<dbReference type="SUPFAM" id="SSF81296">
    <property type="entry name" value="E set domains"/>
    <property type="match status" value="1"/>
</dbReference>
<dbReference type="SUPFAM" id="SSF49417">
    <property type="entry name" value="p53-like transcription factors"/>
    <property type="match status" value="1"/>
</dbReference>
<dbReference type="PROSITE" id="PS50254">
    <property type="entry name" value="REL_2"/>
    <property type="match status" value="1"/>
</dbReference>
<keyword id="KW-0007">Acetylation</keyword>
<keyword id="KW-0010">Activator</keyword>
<keyword id="KW-0013">ADP-ribosylation</keyword>
<keyword id="KW-0158">Chromosome</keyword>
<keyword id="KW-0963">Cytoplasm</keyword>
<keyword id="KW-0227">DNA damage</keyword>
<keyword id="KW-0238">DNA-binding</keyword>
<keyword id="KW-1017">Isopeptide bond</keyword>
<keyword id="KW-0539">Nucleus</keyword>
<keyword id="KW-0597">Phosphoprotein</keyword>
<keyword id="KW-1185">Reference proteome</keyword>
<keyword id="KW-0804">Transcription</keyword>
<keyword id="KW-0805">Transcription regulation</keyword>
<keyword id="KW-0832">Ubl conjugation</keyword>